<name>REX_STRP8</name>
<proteinExistence type="inferred from homology"/>
<feature type="chain" id="PRO_0000097923" description="Redox-sensing transcriptional repressor Rex">
    <location>
        <begin position="1"/>
        <end position="214"/>
    </location>
</feature>
<feature type="DNA-binding region" description="H-T-H motif" evidence="1">
    <location>
        <begin position="17"/>
        <end position="56"/>
    </location>
</feature>
<feature type="binding site" evidence="1">
    <location>
        <begin position="91"/>
        <end position="96"/>
    </location>
    <ligand>
        <name>NAD(+)</name>
        <dbReference type="ChEBI" id="CHEBI:57540"/>
    </ligand>
</feature>
<comment type="function">
    <text evidence="1">Modulates transcription in response to changes in cellular NADH/NAD(+) redox state.</text>
</comment>
<comment type="subunit">
    <text evidence="1">Homodimer.</text>
</comment>
<comment type="subcellular location">
    <subcellularLocation>
        <location evidence="1">Cytoplasm</location>
    </subcellularLocation>
</comment>
<comment type="similarity">
    <text evidence="1">Belongs to the transcriptional regulatory Rex family.</text>
</comment>
<gene>
    <name evidence="1" type="primary">rex</name>
    <name type="ordered locus">spyM18_1081</name>
</gene>
<protein>
    <recommendedName>
        <fullName evidence="1">Redox-sensing transcriptional repressor Rex</fullName>
    </recommendedName>
</protein>
<evidence type="ECO:0000255" key="1">
    <source>
        <dbReference type="HAMAP-Rule" id="MF_01131"/>
    </source>
</evidence>
<dbReference type="EMBL" id="AE009949">
    <property type="protein sequence ID" value="AAL97704.1"/>
    <property type="molecule type" value="Genomic_DNA"/>
</dbReference>
<dbReference type="RefSeq" id="WP_002984705.1">
    <property type="nucleotide sequence ID" value="NC_003485.1"/>
</dbReference>
<dbReference type="SMR" id="P60389"/>
<dbReference type="KEGG" id="spm:spyM18_1081"/>
<dbReference type="HOGENOM" id="CLU_061534_1_1_9"/>
<dbReference type="GO" id="GO:0005737">
    <property type="term" value="C:cytoplasm"/>
    <property type="evidence" value="ECO:0007669"/>
    <property type="project" value="UniProtKB-SubCell"/>
</dbReference>
<dbReference type="GO" id="GO:0003677">
    <property type="term" value="F:DNA binding"/>
    <property type="evidence" value="ECO:0007669"/>
    <property type="project" value="UniProtKB-UniRule"/>
</dbReference>
<dbReference type="GO" id="GO:0003700">
    <property type="term" value="F:DNA-binding transcription factor activity"/>
    <property type="evidence" value="ECO:0007669"/>
    <property type="project" value="UniProtKB-UniRule"/>
</dbReference>
<dbReference type="GO" id="GO:0045892">
    <property type="term" value="P:negative regulation of DNA-templated transcription"/>
    <property type="evidence" value="ECO:0007669"/>
    <property type="project" value="InterPro"/>
</dbReference>
<dbReference type="GO" id="GO:0051775">
    <property type="term" value="P:response to redox state"/>
    <property type="evidence" value="ECO:0007669"/>
    <property type="project" value="InterPro"/>
</dbReference>
<dbReference type="Gene3D" id="3.40.50.720">
    <property type="entry name" value="NAD(P)-binding Rossmann-like Domain"/>
    <property type="match status" value="1"/>
</dbReference>
<dbReference type="Gene3D" id="1.10.10.10">
    <property type="entry name" value="Winged helix-like DNA-binding domain superfamily/Winged helix DNA-binding domain"/>
    <property type="match status" value="1"/>
</dbReference>
<dbReference type="HAMAP" id="MF_01131">
    <property type="entry name" value="Rex"/>
    <property type="match status" value="1"/>
</dbReference>
<dbReference type="InterPro" id="IPR003781">
    <property type="entry name" value="CoA-bd"/>
</dbReference>
<dbReference type="InterPro" id="IPR036291">
    <property type="entry name" value="NAD(P)-bd_dom_sf"/>
</dbReference>
<dbReference type="InterPro" id="IPR009718">
    <property type="entry name" value="Rex_DNA-bd_C_dom"/>
</dbReference>
<dbReference type="InterPro" id="IPR022876">
    <property type="entry name" value="Tscrpt_rep_Rex"/>
</dbReference>
<dbReference type="InterPro" id="IPR036388">
    <property type="entry name" value="WH-like_DNA-bd_sf"/>
</dbReference>
<dbReference type="InterPro" id="IPR036390">
    <property type="entry name" value="WH_DNA-bd_sf"/>
</dbReference>
<dbReference type="NCBIfam" id="NF003988">
    <property type="entry name" value="PRK05472.1-1"/>
    <property type="match status" value="1"/>
</dbReference>
<dbReference type="NCBIfam" id="NF003989">
    <property type="entry name" value="PRK05472.1-3"/>
    <property type="match status" value="1"/>
</dbReference>
<dbReference type="NCBIfam" id="NF003991">
    <property type="entry name" value="PRK05472.1-5"/>
    <property type="match status" value="1"/>
</dbReference>
<dbReference type="NCBIfam" id="NF003994">
    <property type="entry name" value="PRK05472.2-3"/>
    <property type="match status" value="1"/>
</dbReference>
<dbReference type="NCBIfam" id="NF003995">
    <property type="entry name" value="PRK05472.2-4"/>
    <property type="match status" value="1"/>
</dbReference>
<dbReference type="NCBIfam" id="NF003996">
    <property type="entry name" value="PRK05472.2-5"/>
    <property type="match status" value="1"/>
</dbReference>
<dbReference type="PANTHER" id="PTHR35786">
    <property type="entry name" value="REDOX-SENSING TRANSCRIPTIONAL REPRESSOR REX"/>
    <property type="match status" value="1"/>
</dbReference>
<dbReference type="PANTHER" id="PTHR35786:SF1">
    <property type="entry name" value="REDOX-SENSING TRANSCRIPTIONAL REPRESSOR REX 1"/>
    <property type="match status" value="1"/>
</dbReference>
<dbReference type="Pfam" id="PF02629">
    <property type="entry name" value="CoA_binding"/>
    <property type="match status" value="1"/>
</dbReference>
<dbReference type="Pfam" id="PF06971">
    <property type="entry name" value="Put_DNA-bind_N"/>
    <property type="match status" value="1"/>
</dbReference>
<dbReference type="SMART" id="SM00881">
    <property type="entry name" value="CoA_binding"/>
    <property type="match status" value="1"/>
</dbReference>
<dbReference type="SUPFAM" id="SSF51735">
    <property type="entry name" value="NAD(P)-binding Rossmann-fold domains"/>
    <property type="match status" value="1"/>
</dbReference>
<dbReference type="SUPFAM" id="SSF46785">
    <property type="entry name" value="Winged helix' DNA-binding domain"/>
    <property type="match status" value="1"/>
</dbReference>
<keyword id="KW-0963">Cytoplasm</keyword>
<keyword id="KW-0238">DNA-binding</keyword>
<keyword id="KW-0520">NAD</keyword>
<keyword id="KW-0678">Repressor</keyword>
<keyword id="KW-0804">Transcription</keyword>
<keyword id="KW-0805">Transcription regulation</keyword>
<organism>
    <name type="scientific">Streptococcus pyogenes serotype M18 (strain MGAS8232)</name>
    <dbReference type="NCBI Taxonomy" id="186103"/>
    <lineage>
        <taxon>Bacteria</taxon>
        <taxon>Bacillati</taxon>
        <taxon>Bacillota</taxon>
        <taxon>Bacilli</taxon>
        <taxon>Lactobacillales</taxon>
        <taxon>Streptococcaceae</taxon>
        <taxon>Streptococcus</taxon>
    </lineage>
</organism>
<reference key="1">
    <citation type="journal article" date="2002" name="Proc. Natl. Acad. Sci. U.S.A.">
        <title>Genome sequence and comparative microarray analysis of serotype M18 group A Streptococcus strains associated with acute rheumatic fever outbreaks.</title>
        <authorList>
            <person name="Smoot J.C."/>
            <person name="Barbian K.D."/>
            <person name="Van Gompel J.J."/>
            <person name="Smoot L.M."/>
            <person name="Chaussee M.S."/>
            <person name="Sylva G.L."/>
            <person name="Sturdevant D.E."/>
            <person name="Ricklefs S.M."/>
            <person name="Porcella S.F."/>
            <person name="Parkins L.D."/>
            <person name="Beres S.B."/>
            <person name="Campbell D.S."/>
            <person name="Smith T.M."/>
            <person name="Zhang Q."/>
            <person name="Kapur V."/>
            <person name="Daly J.A."/>
            <person name="Veasy L.G."/>
            <person name="Musser J.M."/>
        </authorList>
    </citation>
    <scope>NUCLEOTIDE SEQUENCE [LARGE SCALE GENOMIC DNA]</scope>
    <source>
        <strain>MGAS8232</strain>
    </source>
</reference>
<accession>P60389</accession>
<accession>Q99ZR3</accession>
<sequence length="214" mass="23827">MVIDKSIPKATAKRLSLYYRIFKRFHADQVEKASSKQIADAMGIDSATVRRDFSYFGELGRRGFGYDVTKLMNFFADLLNDHSTTNVILVGCGNIGRALLHYRFHDRNKMQIAMGFDTDDNALVGTKTADNIPVHGISSVKERIANTDIETAILTVPSIHAQEVTDQLIEAGIKGILSFAPVHLQVPKGVIVQSVDLTSELQTLLYFMNQNHLD</sequence>